<sequence>MSEILSSLRSLMASHSPPLDALVVPSEDYHQSEYVSARDKRREFVSGFSGSAGLALITKKEARLWTDGRYFLQALQQLSDEWTLMRMGEDPLVEVWMSDNLPEEANIGVDSWCVSVDTANRWGKSFAKKNQKLITTTTDLVDEVWKSRPPSEMSPVVVHPLEFAGRSVSHKFEDLRAKLKQEGARGLVIAALDEVAWLYNIRGTDVAYCPVVHAFAILTTDSAFLYVDKKKVSDEANSYFNGLGVEVREYTDVISDVALLASDRLISSFASKTVQHEAAKDMEIDSDQPDRLWVDPASCCYALYSKLDAEKVLLQPSPISLSKALKNPVELEGIKNAHVRDGAAVVQYLVWLDNQMQELYGASGYFLEAEASKKKPSETSKLTEVTVSDKLESLRASKEHFRGLSFPTISSVGSNAAVIHYSPEPEACAEMDPDKIYLCDSGAQYLDGTTDITRTVHFGKPSAHEKECYTAVFKGHVALGNARFPKGTNGYTLDILARAPLWKYGLDYRHGTGHGVGSYLCVHEGPHQVSFRPSARNVPLQATMTVTDEPGYYEDGNFGIRLENVLVVNDAETEFNFGDKGYLQFEHITWAPYQVKLIDLDELTREEIDWLNTYHSKCKDILAPFMNQTEMEWLKKATEPVSVSA</sequence>
<dbReference type="EC" id="3.4.11.9" evidence="4"/>
<dbReference type="EMBL" id="AY143575">
    <property type="protein sequence ID" value="AAN41402.1"/>
    <property type="molecule type" value="mRNA"/>
</dbReference>
<dbReference type="EMBL" id="AY552784">
    <property type="protein sequence ID" value="AAS58497.1"/>
    <property type="molecule type" value="mRNA"/>
</dbReference>
<dbReference type="EMBL" id="Z99708">
    <property type="protein sequence ID" value="CAB16823.1"/>
    <property type="molecule type" value="Genomic_DNA"/>
</dbReference>
<dbReference type="EMBL" id="AL161590">
    <property type="protein sequence ID" value="CAB80342.1"/>
    <property type="molecule type" value="Genomic_DNA"/>
</dbReference>
<dbReference type="EMBL" id="CP002687">
    <property type="protein sequence ID" value="AEE86698.1"/>
    <property type="molecule type" value="Genomic_DNA"/>
</dbReference>
<dbReference type="EMBL" id="BT046181">
    <property type="protein sequence ID" value="ACI49780.1"/>
    <property type="molecule type" value="mRNA"/>
</dbReference>
<dbReference type="PIR" id="B85434">
    <property type="entry name" value="B85434"/>
</dbReference>
<dbReference type="RefSeq" id="NP_195394.4">
    <molecule id="F4JQH3-1"/>
    <property type="nucleotide sequence ID" value="NM_119840.7"/>
</dbReference>
<dbReference type="SMR" id="F4JQH3"/>
<dbReference type="FunCoup" id="F4JQH3">
    <property type="interactions" value="677"/>
</dbReference>
<dbReference type="STRING" id="3702.F4JQH3"/>
<dbReference type="MEROPS" id="M24.037"/>
<dbReference type="iPTMnet" id="F4JQH3"/>
<dbReference type="MetOSite" id="F4JQH3"/>
<dbReference type="PaxDb" id="3702-AT4G36760.1"/>
<dbReference type="ProteomicsDB" id="244419">
    <molecule id="F4JQH3-1"/>
</dbReference>
<dbReference type="EnsemblPlants" id="AT4G36760.1">
    <molecule id="F4JQH3-1"/>
    <property type="protein sequence ID" value="AT4G36760.1"/>
    <property type="gene ID" value="AT4G36760"/>
</dbReference>
<dbReference type="GeneID" id="829829"/>
<dbReference type="Gramene" id="AT4G36760.1">
    <molecule id="F4JQH3-1"/>
    <property type="protein sequence ID" value="AT4G36760.1"/>
    <property type="gene ID" value="AT4G36760"/>
</dbReference>
<dbReference type="KEGG" id="ath:AT4G36760"/>
<dbReference type="Araport" id="AT4G36760"/>
<dbReference type="TAIR" id="AT4G36760">
    <property type="gene designation" value="APP1"/>
</dbReference>
<dbReference type="eggNOG" id="KOG2413">
    <property type="taxonomic scope" value="Eukaryota"/>
</dbReference>
<dbReference type="HOGENOM" id="CLU_011781_2_0_1"/>
<dbReference type="InParanoid" id="F4JQH3"/>
<dbReference type="OrthoDB" id="9995434at2759"/>
<dbReference type="PRO" id="PR:F4JQH3"/>
<dbReference type="Proteomes" id="UP000006548">
    <property type="component" value="Chromosome 4"/>
</dbReference>
<dbReference type="ExpressionAtlas" id="F4JQH3">
    <property type="expression patterns" value="baseline and differential"/>
</dbReference>
<dbReference type="GO" id="GO:0005737">
    <property type="term" value="C:cytoplasm"/>
    <property type="evidence" value="ECO:0000314"/>
    <property type="project" value="UniProtKB"/>
</dbReference>
<dbReference type="GO" id="GO:0005829">
    <property type="term" value="C:cytosol"/>
    <property type="evidence" value="ECO:0007005"/>
    <property type="project" value="TAIR"/>
</dbReference>
<dbReference type="GO" id="GO:0005783">
    <property type="term" value="C:endoplasmic reticulum"/>
    <property type="evidence" value="ECO:0007669"/>
    <property type="project" value="UniProtKB-KW"/>
</dbReference>
<dbReference type="GO" id="GO:0005886">
    <property type="term" value="C:plasma membrane"/>
    <property type="evidence" value="ECO:0000314"/>
    <property type="project" value="TAIR"/>
</dbReference>
<dbReference type="GO" id="GO:0004177">
    <property type="term" value="F:aminopeptidase activity"/>
    <property type="evidence" value="ECO:0000314"/>
    <property type="project" value="TAIR"/>
</dbReference>
<dbReference type="GO" id="GO:0030145">
    <property type="term" value="F:manganese ion binding"/>
    <property type="evidence" value="ECO:0000314"/>
    <property type="project" value="UniProtKB"/>
</dbReference>
<dbReference type="GO" id="GO:0070006">
    <property type="term" value="F:metalloaminopeptidase activity"/>
    <property type="evidence" value="ECO:0007669"/>
    <property type="project" value="InterPro"/>
</dbReference>
<dbReference type="GO" id="GO:0010013">
    <property type="term" value="F:N-1-naphthylphthalamic acid binding"/>
    <property type="evidence" value="ECO:0000314"/>
    <property type="project" value="TAIR"/>
</dbReference>
<dbReference type="GO" id="GO:0008270">
    <property type="term" value="F:zinc ion binding"/>
    <property type="evidence" value="ECO:0000314"/>
    <property type="project" value="UniProtKB"/>
</dbReference>
<dbReference type="GO" id="GO:0009926">
    <property type="term" value="P:auxin polar transport"/>
    <property type="evidence" value="ECO:0000304"/>
    <property type="project" value="TAIR"/>
</dbReference>
<dbReference type="GO" id="GO:0006508">
    <property type="term" value="P:proteolysis"/>
    <property type="evidence" value="ECO:0007669"/>
    <property type="project" value="UniProtKB-KW"/>
</dbReference>
<dbReference type="CDD" id="cd01085">
    <property type="entry name" value="APP"/>
    <property type="match status" value="1"/>
</dbReference>
<dbReference type="FunFam" id="3.40.350.10:FF:000010">
    <property type="entry name" value="Probable Xaa-Pro aminopeptidase P"/>
    <property type="match status" value="1"/>
</dbReference>
<dbReference type="FunFam" id="3.90.230.10:FF:000007">
    <property type="entry name" value="Xaa-Pro aminopeptidase P"/>
    <property type="match status" value="1"/>
</dbReference>
<dbReference type="FunFam" id="3.40.350.10:FF:000003">
    <property type="entry name" value="Xaa-pro aminopeptidase P"/>
    <property type="match status" value="1"/>
</dbReference>
<dbReference type="Gene3D" id="3.90.230.10">
    <property type="entry name" value="Creatinase/methionine aminopeptidase superfamily"/>
    <property type="match status" value="1"/>
</dbReference>
<dbReference type="Gene3D" id="3.40.350.10">
    <property type="entry name" value="Creatinase/prolidase N-terminal domain"/>
    <property type="match status" value="2"/>
</dbReference>
<dbReference type="InterPro" id="IPR029149">
    <property type="entry name" value="Creatin/AminoP/Spt16_N"/>
</dbReference>
<dbReference type="InterPro" id="IPR036005">
    <property type="entry name" value="Creatinase/aminopeptidase-like"/>
</dbReference>
<dbReference type="InterPro" id="IPR000587">
    <property type="entry name" value="Creatinase_N"/>
</dbReference>
<dbReference type="InterPro" id="IPR000994">
    <property type="entry name" value="Pept_M24"/>
</dbReference>
<dbReference type="InterPro" id="IPR033740">
    <property type="entry name" value="Pept_M24B"/>
</dbReference>
<dbReference type="InterPro" id="IPR032416">
    <property type="entry name" value="Peptidase_M24_C"/>
</dbReference>
<dbReference type="InterPro" id="IPR001131">
    <property type="entry name" value="Peptidase_M24B_aminopep-P_CS"/>
</dbReference>
<dbReference type="InterPro" id="IPR050422">
    <property type="entry name" value="X-Pro_aminopeptidase_P"/>
</dbReference>
<dbReference type="PANTHER" id="PTHR43763:SF12">
    <property type="entry name" value="AMINOPEPTIDASE P1"/>
    <property type="match status" value="1"/>
</dbReference>
<dbReference type="PANTHER" id="PTHR43763">
    <property type="entry name" value="XAA-PRO AMINOPEPTIDASE 1"/>
    <property type="match status" value="1"/>
</dbReference>
<dbReference type="Pfam" id="PF01321">
    <property type="entry name" value="Creatinase_N"/>
    <property type="match status" value="1"/>
</dbReference>
<dbReference type="Pfam" id="PF16189">
    <property type="entry name" value="Creatinase_N_2"/>
    <property type="match status" value="1"/>
</dbReference>
<dbReference type="Pfam" id="PF00557">
    <property type="entry name" value="Peptidase_M24"/>
    <property type="match status" value="1"/>
</dbReference>
<dbReference type="Pfam" id="PF16188">
    <property type="entry name" value="Peptidase_M24_C"/>
    <property type="match status" value="1"/>
</dbReference>
<dbReference type="SUPFAM" id="SSF55920">
    <property type="entry name" value="Creatinase/aminopeptidase"/>
    <property type="match status" value="1"/>
</dbReference>
<dbReference type="SUPFAM" id="SSF53092">
    <property type="entry name" value="Creatinase/prolidase N-terminal domain"/>
    <property type="match status" value="1"/>
</dbReference>
<dbReference type="PROSITE" id="PS00491">
    <property type="entry name" value="PROLINE_PEPTIDASE"/>
    <property type="match status" value="1"/>
</dbReference>
<gene>
    <name evidence="5" type="primary">APP1</name>
    <name evidence="7" type="ordered locus">At4g36760</name>
    <name evidence="9" type="ORF">AP22.64</name>
    <name evidence="8" type="ORF">C7A10.600</name>
</gene>
<comment type="function">
    <text evidence="3 4">Catalyzes the removal of a penultimate prolyl residue from the N-termini of peptides, such as Arg-Pro-Pro (By similarity). Aminopeptidase that binds to the auxin transport inhibitor N-1-naphthylphthalamic acid (NPA). May play a negative role in the regulation of PIN auxin transport proteins (PubMed:11891249).</text>
</comment>
<comment type="catalytic activity">
    <reaction evidence="4">
        <text>Release of any N-terminal amino acid, including proline, that is linked to proline, even from a dipeptide or tripeptide.</text>
        <dbReference type="EC" id="3.4.11.9"/>
    </reaction>
</comment>
<comment type="cofactor">
    <cofactor evidence="4">
        <name>Mn(2+)</name>
        <dbReference type="ChEBI" id="CHEBI:29035"/>
    </cofactor>
    <cofactor evidence="4">
        <name>Zn(2+)</name>
        <dbReference type="ChEBI" id="CHEBI:29105"/>
    </cofactor>
    <text evidence="4">Binds 2 manganese or zinc ions per subunit.</text>
</comment>
<comment type="activity regulation">
    <text evidence="4">Inhibited by EGTA and apstatin, and, to some extent, by the flavonoid kaempferol.</text>
</comment>
<comment type="biophysicochemical properties">
    <kinetics>
        <Vmax evidence="4">36.0 nmol/min/mg enzyme for Tyr-aminofluoromethylcoumarin</Vmax>
        <Vmax evidence="4">20.0 nmol/min/mg enzyme for Trp-aminofluoromethylcoumarin</Vmax>
        <Vmax evidence="4">74.0 nmol/min/mg enzyme for Ala-Pro-aminofluoromethylcoumarin</Vmax>
        <Vmax evidence="4">29.0 nmol/min/mg enzyme for Pro-aminofluoromethylcoumarin</Vmax>
    </kinetics>
</comment>
<comment type="subunit">
    <text evidence="2 4">Homodimer (By similarity). Interacts with N-1-naphthylphthalamic acid (NPA) (PubMed:11891249).</text>
</comment>
<comment type="subcellular location">
    <subcellularLocation>
        <location evidence="4">Cytoplasm</location>
    </subcellularLocation>
    <subcellularLocation>
        <location evidence="4">Cell membrane</location>
        <topology evidence="5">Peripheral membrane protein</topology>
    </subcellularLocation>
    <subcellularLocation>
        <location evidence="4">Microsome membrane</location>
        <topology evidence="5">Peripheral membrane protein</topology>
    </subcellularLocation>
</comment>
<comment type="alternative products">
    <event type="alternative splicing"/>
    <isoform>
        <id>F4JQH3-1</id>
        <name>1</name>
        <sequence type="displayed"/>
    </isoform>
    <isoform>
        <id>F4JQH3-2</id>
        <name>2</name>
        <sequence type="described" ref="VSP_059579"/>
    </isoform>
</comment>
<comment type="tissue specificity">
    <text evidence="4">Ubiquitous with preferential expression in 5 days-old seedlings, roots, flowers, inflorescences and rosette leaves (at protein levels).</text>
</comment>
<comment type="developmental stage">
    <text evidence="4">Expression starts at 3 days and peaks at 5 days. After, expression levels remain constant from 7 to 10 days.</text>
</comment>
<comment type="PTM">
    <text evidence="4">Glycosylated. Also present in a non-glycosylated form.</text>
</comment>
<comment type="similarity">
    <text evidence="6">Belongs to the peptidase M24B family.</text>
</comment>
<accession>F4JQH3</accession>
<accession>O23206</accession>
<accession>Q6Q8B7</accession>
<accession>Q8H1P6</accession>
<keyword id="KW-0007">Acetylation</keyword>
<keyword id="KW-0025">Alternative splicing</keyword>
<keyword id="KW-0031">Aminopeptidase</keyword>
<keyword id="KW-1003">Cell membrane</keyword>
<keyword id="KW-0963">Cytoplasm</keyword>
<keyword id="KW-0903">Direct protein sequencing</keyword>
<keyword id="KW-0256">Endoplasmic reticulum</keyword>
<keyword id="KW-0325">Glycoprotein</keyword>
<keyword id="KW-0378">Hydrolase</keyword>
<keyword id="KW-0464">Manganese</keyword>
<keyword id="KW-0472">Membrane</keyword>
<keyword id="KW-0479">Metal-binding</keyword>
<keyword id="KW-0482">Metalloprotease</keyword>
<keyword id="KW-0492">Microsome</keyword>
<keyword id="KW-0645">Protease</keyword>
<keyword id="KW-1185">Reference proteome</keyword>
<proteinExistence type="evidence at protein level"/>
<organism>
    <name type="scientific">Arabidopsis thaliana</name>
    <name type="common">Mouse-ear cress</name>
    <dbReference type="NCBI Taxonomy" id="3702"/>
    <lineage>
        <taxon>Eukaryota</taxon>
        <taxon>Viridiplantae</taxon>
        <taxon>Streptophyta</taxon>
        <taxon>Embryophyta</taxon>
        <taxon>Tracheophyta</taxon>
        <taxon>Spermatophyta</taxon>
        <taxon>Magnoliopsida</taxon>
        <taxon>eudicotyledons</taxon>
        <taxon>Gunneridae</taxon>
        <taxon>Pentapetalae</taxon>
        <taxon>rosids</taxon>
        <taxon>malvids</taxon>
        <taxon>Brassicales</taxon>
        <taxon>Brassicaceae</taxon>
        <taxon>Camelineae</taxon>
        <taxon>Arabidopsis</taxon>
    </lineage>
</organism>
<feature type="initiator methionine" description="Removed" evidence="10">
    <location>
        <position position="1"/>
    </location>
</feature>
<feature type="chain" id="PRO_0000444155" description="Aminopeptidase P1">
    <location>
        <begin position="2"/>
        <end position="645"/>
    </location>
</feature>
<feature type="binding site" evidence="1">
    <location>
        <position position="69"/>
    </location>
    <ligand>
        <name>a peptide</name>
        <dbReference type="ChEBI" id="CHEBI:60466"/>
    </ligand>
</feature>
<feature type="binding site" evidence="1">
    <location>
        <position position="420"/>
    </location>
    <ligand>
        <name>a peptide</name>
        <dbReference type="ChEBI" id="CHEBI:60466"/>
    </ligand>
</feature>
<feature type="binding site" evidence="2">
    <location>
        <position position="440"/>
    </location>
    <ligand>
        <name>Mn(2+)</name>
        <dbReference type="ChEBI" id="CHEBI:29035"/>
        <label>1</label>
    </ligand>
</feature>
<feature type="binding site" evidence="2">
    <location>
        <position position="451"/>
    </location>
    <ligand>
        <name>Mn(2+)</name>
        <dbReference type="ChEBI" id="CHEBI:29035"/>
        <label>1</label>
    </ligand>
</feature>
<feature type="binding site" evidence="2">
    <location>
        <position position="451"/>
    </location>
    <ligand>
        <name>Mn(2+)</name>
        <dbReference type="ChEBI" id="CHEBI:29035"/>
        <label>2</label>
    </ligand>
</feature>
<feature type="binding site" evidence="1">
    <location>
        <position position="514"/>
    </location>
    <ligand>
        <name>a peptide</name>
        <dbReference type="ChEBI" id="CHEBI:60466"/>
    </ligand>
</feature>
<feature type="binding site" evidence="2">
    <location>
        <position position="514"/>
    </location>
    <ligand>
        <name>Mn(2+)</name>
        <dbReference type="ChEBI" id="CHEBI:29035"/>
        <label>2</label>
    </ligand>
</feature>
<feature type="binding site" evidence="1">
    <location>
        <position position="523"/>
    </location>
    <ligand>
        <name>a peptide</name>
        <dbReference type="ChEBI" id="CHEBI:60466"/>
    </ligand>
</feature>
<feature type="binding site" evidence="1">
    <location>
        <position position="549"/>
    </location>
    <ligand>
        <name>a peptide</name>
        <dbReference type="ChEBI" id="CHEBI:60466"/>
    </ligand>
</feature>
<feature type="binding site" evidence="2">
    <location>
        <position position="549"/>
    </location>
    <ligand>
        <name>Mn(2+)</name>
        <dbReference type="ChEBI" id="CHEBI:29035"/>
        <label>2</label>
    </ligand>
</feature>
<feature type="binding site" evidence="2">
    <location>
        <position position="563"/>
    </location>
    <ligand>
        <name>Mn(2+)</name>
        <dbReference type="ChEBI" id="CHEBI:29035"/>
        <label>1</label>
    </ligand>
</feature>
<feature type="binding site" evidence="2">
    <location>
        <position position="563"/>
    </location>
    <ligand>
        <name>Mn(2+)</name>
        <dbReference type="ChEBI" id="CHEBI:29035"/>
        <label>2</label>
    </ligand>
</feature>
<feature type="modified residue" description="N-acetylserine" evidence="10">
    <location>
        <position position="2"/>
    </location>
</feature>
<feature type="splice variant" id="VSP_059579" description="In isoform 2.">
    <location>
        <begin position="1"/>
        <end position="11"/>
    </location>
</feature>
<feature type="sequence conflict" description="In Ref. 1; AAN41402/AAS58497." evidence="6" ref="1">
    <location>
        <position position="394"/>
    </location>
</feature>
<reference key="1">
    <citation type="journal article" date="2002" name="Plant Physiol.">
        <title>Identification, purification, and molecular cloning of N-1-naphthylphthalmic acid-binding plasma membrane-associated aminopeptidases from Arabidopsis.</title>
        <authorList>
            <person name="Murphy A.S."/>
            <person name="Hoogner K.R."/>
            <person name="Peer W.A."/>
            <person name="Taiz L."/>
        </authorList>
    </citation>
    <scope>NUCLEOTIDE SEQUENCE [MRNA] (ISOFORMS 1 AND 2)</scope>
    <scope>PROTEIN SEQUENCE OF 231-244</scope>
    <scope>FUNCTION</scope>
    <scope>CATALYTIC ACTIVITY</scope>
    <scope>GLYCOSYLATION</scope>
    <scope>TISSUE SPECIFICITY</scope>
    <scope>SUBCELLULAR LOCATION</scope>
    <scope>DEVELOPMENTAL STAGE</scope>
    <scope>BIOPHYSICOCHEMICAL PROPERTIES</scope>
    <scope>ACTIVITY REGULATION</scope>
    <scope>BINDING TO NPA</scope>
    <scope>GENE FAMILY</scope>
    <scope>NOMENCLATURE</scope>
    <source>
        <strain>cv. Columbia</strain>
    </source>
</reference>
<reference key="2">
    <citation type="journal article" date="1998" name="Nature">
        <title>Analysis of 1.9 Mb of contiguous sequence from chromosome 4 of Arabidopsis thaliana.</title>
        <authorList>
            <person name="Bevan M."/>
            <person name="Bancroft I."/>
            <person name="Bent E."/>
            <person name="Love K."/>
            <person name="Goodman H.M."/>
            <person name="Dean C."/>
            <person name="Bergkamp R."/>
            <person name="Dirkse W."/>
            <person name="van Staveren M."/>
            <person name="Stiekema W."/>
            <person name="Drost L."/>
            <person name="Ridley P."/>
            <person name="Hudson S.-A."/>
            <person name="Patel K."/>
            <person name="Murphy G."/>
            <person name="Piffanelli P."/>
            <person name="Wedler H."/>
            <person name="Wedler E."/>
            <person name="Wambutt R."/>
            <person name="Weitzenegger T."/>
            <person name="Pohl T."/>
            <person name="Terryn N."/>
            <person name="Gielen J."/>
            <person name="Villarroel R."/>
            <person name="De Clercq R."/>
            <person name="van Montagu M."/>
            <person name="Lecharny A."/>
            <person name="Aubourg S."/>
            <person name="Gy I."/>
            <person name="Kreis M."/>
            <person name="Lao N."/>
            <person name="Kavanagh T."/>
            <person name="Hempel S."/>
            <person name="Kotter P."/>
            <person name="Entian K.-D."/>
            <person name="Rieger M."/>
            <person name="Schaefer M."/>
            <person name="Funk B."/>
            <person name="Mueller-Auer S."/>
            <person name="Silvey M."/>
            <person name="James R."/>
            <person name="Monfort A."/>
            <person name="Pons A."/>
            <person name="Puigdomenech P."/>
            <person name="Douka A."/>
            <person name="Voukelatou E."/>
            <person name="Milioni D."/>
            <person name="Hatzopoulos P."/>
            <person name="Piravandi E."/>
            <person name="Obermaier B."/>
            <person name="Hilbert H."/>
            <person name="Duesterhoeft A."/>
            <person name="Moores T."/>
            <person name="Jones J.D.G."/>
            <person name="Eneva T."/>
            <person name="Palme K."/>
            <person name="Benes V."/>
            <person name="Rechmann S."/>
            <person name="Ansorge W."/>
            <person name="Cooke R."/>
            <person name="Berger C."/>
            <person name="Delseny M."/>
            <person name="Voet M."/>
            <person name="Volckaert G."/>
            <person name="Mewes H.-W."/>
            <person name="Klosterman S."/>
            <person name="Schueller C."/>
            <person name="Chalwatzis N."/>
        </authorList>
    </citation>
    <scope>NUCLEOTIDE SEQUENCE [LARGE SCALE GENOMIC DNA]</scope>
    <source>
        <strain>cv. Columbia</strain>
    </source>
</reference>
<reference key="3">
    <citation type="journal article" date="1999" name="Nature">
        <title>Sequence and analysis of chromosome 4 of the plant Arabidopsis thaliana.</title>
        <authorList>
            <person name="Mayer K.F.X."/>
            <person name="Schueller C."/>
            <person name="Wambutt R."/>
            <person name="Murphy G."/>
            <person name="Volckaert G."/>
            <person name="Pohl T."/>
            <person name="Duesterhoeft A."/>
            <person name="Stiekema W."/>
            <person name="Entian K.-D."/>
            <person name="Terryn N."/>
            <person name="Harris B."/>
            <person name="Ansorge W."/>
            <person name="Brandt P."/>
            <person name="Grivell L.A."/>
            <person name="Rieger M."/>
            <person name="Weichselgartner M."/>
            <person name="de Simone V."/>
            <person name="Obermaier B."/>
            <person name="Mache R."/>
            <person name="Mueller M."/>
            <person name="Kreis M."/>
            <person name="Delseny M."/>
            <person name="Puigdomenech P."/>
            <person name="Watson M."/>
            <person name="Schmidtheini T."/>
            <person name="Reichert B."/>
            <person name="Portetelle D."/>
            <person name="Perez-Alonso M."/>
            <person name="Boutry M."/>
            <person name="Bancroft I."/>
            <person name="Vos P."/>
            <person name="Hoheisel J."/>
            <person name="Zimmermann W."/>
            <person name="Wedler H."/>
            <person name="Ridley P."/>
            <person name="Langham S.-A."/>
            <person name="McCullagh B."/>
            <person name="Bilham L."/>
            <person name="Robben J."/>
            <person name="van der Schueren J."/>
            <person name="Grymonprez B."/>
            <person name="Chuang Y.-J."/>
            <person name="Vandenbussche F."/>
            <person name="Braeken M."/>
            <person name="Weltjens I."/>
            <person name="Voet M."/>
            <person name="Bastiaens I."/>
            <person name="Aert R."/>
            <person name="Defoor E."/>
            <person name="Weitzenegger T."/>
            <person name="Bothe G."/>
            <person name="Ramsperger U."/>
            <person name="Hilbert H."/>
            <person name="Braun M."/>
            <person name="Holzer E."/>
            <person name="Brandt A."/>
            <person name="Peters S."/>
            <person name="van Staveren M."/>
            <person name="Dirkse W."/>
            <person name="Mooijman P."/>
            <person name="Klein Lankhorst R."/>
            <person name="Rose M."/>
            <person name="Hauf J."/>
            <person name="Koetter P."/>
            <person name="Berneiser S."/>
            <person name="Hempel S."/>
            <person name="Feldpausch M."/>
            <person name="Lamberth S."/>
            <person name="Van den Daele H."/>
            <person name="De Keyser A."/>
            <person name="Buysshaert C."/>
            <person name="Gielen J."/>
            <person name="Villarroel R."/>
            <person name="De Clercq R."/>
            <person name="van Montagu M."/>
            <person name="Rogers J."/>
            <person name="Cronin A."/>
            <person name="Quail M.A."/>
            <person name="Bray-Allen S."/>
            <person name="Clark L."/>
            <person name="Doggett J."/>
            <person name="Hall S."/>
            <person name="Kay M."/>
            <person name="Lennard N."/>
            <person name="McLay K."/>
            <person name="Mayes R."/>
            <person name="Pettett A."/>
            <person name="Rajandream M.A."/>
            <person name="Lyne M."/>
            <person name="Benes V."/>
            <person name="Rechmann S."/>
            <person name="Borkova D."/>
            <person name="Bloecker H."/>
            <person name="Scharfe M."/>
            <person name="Grimm M."/>
            <person name="Loehnert T.-H."/>
            <person name="Dose S."/>
            <person name="de Haan M."/>
            <person name="Maarse A.C."/>
            <person name="Schaefer M."/>
            <person name="Mueller-Auer S."/>
            <person name="Gabel C."/>
            <person name="Fuchs M."/>
            <person name="Fartmann B."/>
            <person name="Granderath K."/>
            <person name="Dauner D."/>
            <person name="Herzl A."/>
            <person name="Neumann S."/>
            <person name="Argiriou A."/>
            <person name="Vitale D."/>
            <person name="Liguori R."/>
            <person name="Piravandi E."/>
            <person name="Massenet O."/>
            <person name="Quigley F."/>
            <person name="Clabauld G."/>
            <person name="Muendlein A."/>
            <person name="Felber R."/>
            <person name="Schnabl S."/>
            <person name="Hiller R."/>
            <person name="Schmidt W."/>
            <person name="Lecharny A."/>
            <person name="Aubourg S."/>
            <person name="Chefdor F."/>
            <person name="Cooke R."/>
            <person name="Berger C."/>
            <person name="Monfort A."/>
            <person name="Casacuberta E."/>
            <person name="Gibbons T."/>
            <person name="Weber N."/>
            <person name="Vandenbol M."/>
            <person name="Bargues M."/>
            <person name="Terol J."/>
            <person name="Torres A."/>
            <person name="Perez-Perez A."/>
            <person name="Purnelle B."/>
            <person name="Bent E."/>
            <person name="Johnson S."/>
            <person name="Tacon D."/>
            <person name="Jesse T."/>
            <person name="Heijnen L."/>
            <person name="Schwarz S."/>
            <person name="Scholler P."/>
            <person name="Heber S."/>
            <person name="Francs P."/>
            <person name="Bielke C."/>
            <person name="Frishman D."/>
            <person name="Haase D."/>
            <person name="Lemcke K."/>
            <person name="Mewes H.-W."/>
            <person name="Stocker S."/>
            <person name="Zaccaria P."/>
            <person name="Bevan M."/>
            <person name="Wilson R.K."/>
            <person name="de la Bastide M."/>
            <person name="Habermann K."/>
            <person name="Parnell L."/>
            <person name="Dedhia N."/>
            <person name="Gnoj L."/>
            <person name="Schutz K."/>
            <person name="Huang E."/>
            <person name="Spiegel L."/>
            <person name="Sekhon M."/>
            <person name="Murray J."/>
            <person name="Sheet P."/>
            <person name="Cordes M."/>
            <person name="Abu-Threideh J."/>
            <person name="Stoneking T."/>
            <person name="Kalicki J."/>
            <person name="Graves T."/>
            <person name="Harmon G."/>
            <person name="Edwards J."/>
            <person name="Latreille P."/>
            <person name="Courtney L."/>
            <person name="Cloud J."/>
            <person name="Abbott A."/>
            <person name="Scott K."/>
            <person name="Johnson D."/>
            <person name="Minx P."/>
            <person name="Bentley D."/>
            <person name="Fulton B."/>
            <person name="Miller N."/>
            <person name="Greco T."/>
            <person name="Kemp K."/>
            <person name="Kramer J."/>
            <person name="Fulton L."/>
            <person name="Mardis E."/>
            <person name="Dante M."/>
            <person name="Pepin K."/>
            <person name="Hillier L.W."/>
            <person name="Nelson J."/>
            <person name="Spieth J."/>
            <person name="Ryan E."/>
            <person name="Andrews S."/>
            <person name="Geisel C."/>
            <person name="Layman D."/>
            <person name="Du H."/>
            <person name="Ali J."/>
            <person name="Berghoff A."/>
            <person name="Jones K."/>
            <person name="Drone K."/>
            <person name="Cotton M."/>
            <person name="Joshu C."/>
            <person name="Antonoiu B."/>
            <person name="Zidanic M."/>
            <person name="Strong C."/>
            <person name="Sun H."/>
            <person name="Lamar B."/>
            <person name="Yordan C."/>
            <person name="Ma P."/>
            <person name="Zhong J."/>
            <person name="Preston R."/>
            <person name="Vil D."/>
            <person name="Shekher M."/>
            <person name="Matero A."/>
            <person name="Shah R."/>
            <person name="Swaby I.K."/>
            <person name="O'Shaughnessy A."/>
            <person name="Rodriguez M."/>
            <person name="Hoffman J."/>
            <person name="Till S."/>
            <person name="Granat S."/>
            <person name="Shohdy N."/>
            <person name="Hasegawa A."/>
            <person name="Hameed A."/>
            <person name="Lodhi M."/>
            <person name="Johnson A."/>
            <person name="Chen E."/>
            <person name="Marra M.A."/>
            <person name="Martienssen R."/>
            <person name="McCombie W.R."/>
        </authorList>
    </citation>
    <scope>NUCLEOTIDE SEQUENCE [LARGE SCALE GENOMIC DNA]</scope>
    <source>
        <strain>cv. Columbia</strain>
    </source>
</reference>
<reference key="4">
    <citation type="journal article" date="2017" name="Plant J.">
        <title>Araport11: a complete reannotation of the Arabidopsis thaliana reference genome.</title>
        <authorList>
            <person name="Cheng C.Y."/>
            <person name="Krishnakumar V."/>
            <person name="Chan A.P."/>
            <person name="Thibaud-Nissen F."/>
            <person name="Schobel S."/>
            <person name="Town C.D."/>
        </authorList>
    </citation>
    <scope>GENOME REANNOTATION</scope>
    <source>
        <strain>cv. Columbia</strain>
    </source>
</reference>
<reference key="5">
    <citation type="submission" date="2008-10" db="EMBL/GenBank/DDBJ databases">
        <title>Arabidopsis ORF clones.</title>
        <authorList>
            <person name="de los Reyes C."/>
            <person name="Quan R."/>
            <person name="Chen H."/>
            <person name="Bautista V."/>
            <person name="Kim C.J."/>
            <person name="Ecker J.R."/>
        </authorList>
    </citation>
    <scope>NUCLEOTIDE SEQUENCE [LARGE SCALE MRNA] (ISOFORM 2)</scope>
    <source>
        <strain>cv. Columbia</strain>
    </source>
</reference>
<reference key="6">
    <citation type="journal article" date="2012" name="Mol. Cell. Proteomics">
        <title>Comparative large-scale characterisation of plant vs. mammal proteins reveals similar and idiosyncratic N-alpha acetylation features.</title>
        <authorList>
            <person name="Bienvenut W.V."/>
            <person name="Sumpton D."/>
            <person name="Martinez A."/>
            <person name="Lilla S."/>
            <person name="Espagne C."/>
            <person name="Meinnel T."/>
            <person name="Giglione C."/>
        </authorList>
    </citation>
    <scope>ACETYLATION [LARGE SCALE ANALYSIS] AT SER-2</scope>
    <scope>CLEAVAGE OF INITIATOR METHIONINE [LARGE SCALE ANALYSIS]</scope>
    <scope>IDENTIFICATION BY MASS SPECTROMETRY [LARGE SCALE ANALYSIS]</scope>
</reference>
<evidence type="ECO:0000250" key="1">
    <source>
        <dbReference type="UniProtKB" id="O44750"/>
    </source>
</evidence>
<evidence type="ECO:0000250" key="2">
    <source>
        <dbReference type="UniProtKB" id="Q9NQW7"/>
    </source>
</evidence>
<evidence type="ECO:0000250" key="3">
    <source>
        <dbReference type="UniProtKB" id="Q9VJG0"/>
    </source>
</evidence>
<evidence type="ECO:0000269" key="4">
    <source>
    </source>
</evidence>
<evidence type="ECO:0000303" key="5">
    <source>
    </source>
</evidence>
<evidence type="ECO:0000305" key="6"/>
<evidence type="ECO:0000312" key="7">
    <source>
        <dbReference type="Araport" id="AT4G36760"/>
    </source>
</evidence>
<evidence type="ECO:0000312" key="8">
    <source>
        <dbReference type="EMBL" id="CAB16823.1"/>
    </source>
</evidence>
<evidence type="ECO:0000312" key="9">
    <source>
        <dbReference type="EMBL" id="CAB80342.1"/>
    </source>
</evidence>
<evidence type="ECO:0007744" key="10">
    <source>
    </source>
</evidence>
<protein>
    <recommendedName>
        <fullName evidence="5">Aminopeptidase P1</fullName>
        <shortName evidence="5">AtAPP1</shortName>
        <ecNumber evidence="4">3.4.11.9</ecNumber>
    </recommendedName>
</protein>
<name>AMPP1_ARATH</name>